<keyword id="KW-0067">ATP-binding</keyword>
<keyword id="KW-0227">DNA damage</keyword>
<keyword id="KW-0234">DNA repair</keyword>
<keyword id="KW-0238">DNA-binding</keyword>
<keyword id="KW-0547">Nucleotide-binding</keyword>
<gene>
    <name evidence="1" type="primary">mutS</name>
    <name type="ordered locus">XCV1352</name>
</gene>
<proteinExistence type="inferred from homology"/>
<comment type="function">
    <text evidence="1">This protein is involved in the repair of mismatches in DNA. It is possible that it carries out the mismatch recognition step. This protein has a weak ATPase activity.</text>
</comment>
<comment type="similarity">
    <text evidence="1">Belongs to the DNA mismatch repair MutS family.</text>
</comment>
<sequence length="873" mass="95750">MQSTDTKEKNKNASGAVEHTPLMKQFFAAKSDYPDLLLFFRMGDFYELFYDDARKAARLLDITLTQRGSSGGAPIPMAGVPVHAYEGYLARLVALGESVAICEQIGDPALAKGLVERKVVRIVTPGTVTDEALLDERRDTLLMAISRSKHGYGLAWADLAGGRFLVNEVDSADALEAEIARLEPAELLVPDEDNWPDFLRGRTGVRRRPPWLFDADSGRRQLLAFFKLHDLSGFGIDDKPCATAAAGALLGYVEETQKQRLPHLTSIAMEVASEAISMNAATRRHLELDTRVDGDTRNTLLGVLDSTVTPMGGRLLRRWLHRPLRLRDVLLQRHHAVGTLIDAGADADLREAFRALGDLERILTRVALRSARPRDFSTLRDGLALLPKVRTILAPLDSPRLQTLHAELGEHDATAHLLISAVAETPPLKLSDGGVIATGYDAELDELRRLSTNADQFLIDLEQRERASSGIATLKVGYNRVHGYYIEISKGQAEKAPLHYSRRQTLTNAERYITEELKSFEDKVLSARERSLSREKLLYEGLLDALGTELEGLKRCAGALSELDVLAGFAERAQALDWSQPELDHAPCLRIEHGRHPVVEAVREQPFEPNDLDLHSDRRMLVITGPNMGGKSTYMRQNALIVLLAHIGSYVPASRAVIGPIDRILTRIGAGDDLARGQSTFMVEMAETSYILHHATPQSLVLMDEIGRGTSTYDGLALADAVARHLAHTNRCYTLFATHYFELTALADESHAGGASGIANVHLDAVEHGERLVFMHAVKDGPANRSFGLQVAALAGLPKAAVTQARRRLVELEQRGGESHSAQMAPTALDAPQQFGLFTAPSSAAQEALQALDPDELTPKQALEALYRLKALL</sequence>
<dbReference type="EMBL" id="AM039952">
    <property type="protein sequence ID" value="CAJ22983.1"/>
    <property type="molecule type" value="Genomic_DNA"/>
</dbReference>
<dbReference type="RefSeq" id="WP_011346798.1">
    <property type="nucleotide sequence ID" value="NZ_CP017190.1"/>
</dbReference>
<dbReference type="SMR" id="Q3BVY0"/>
<dbReference type="STRING" id="456327.BJD11_15920"/>
<dbReference type="KEGG" id="xcv:XCV1352"/>
<dbReference type="eggNOG" id="COG0249">
    <property type="taxonomic scope" value="Bacteria"/>
</dbReference>
<dbReference type="HOGENOM" id="CLU_002472_4_0_6"/>
<dbReference type="Proteomes" id="UP000007069">
    <property type="component" value="Chromosome"/>
</dbReference>
<dbReference type="GO" id="GO:0005829">
    <property type="term" value="C:cytosol"/>
    <property type="evidence" value="ECO:0007669"/>
    <property type="project" value="TreeGrafter"/>
</dbReference>
<dbReference type="GO" id="GO:0005524">
    <property type="term" value="F:ATP binding"/>
    <property type="evidence" value="ECO:0007669"/>
    <property type="project" value="UniProtKB-UniRule"/>
</dbReference>
<dbReference type="GO" id="GO:0140664">
    <property type="term" value="F:ATP-dependent DNA damage sensor activity"/>
    <property type="evidence" value="ECO:0007669"/>
    <property type="project" value="InterPro"/>
</dbReference>
<dbReference type="GO" id="GO:0003684">
    <property type="term" value="F:damaged DNA binding"/>
    <property type="evidence" value="ECO:0007669"/>
    <property type="project" value="UniProtKB-UniRule"/>
</dbReference>
<dbReference type="GO" id="GO:0030983">
    <property type="term" value="F:mismatched DNA binding"/>
    <property type="evidence" value="ECO:0007669"/>
    <property type="project" value="InterPro"/>
</dbReference>
<dbReference type="GO" id="GO:0006298">
    <property type="term" value="P:mismatch repair"/>
    <property type="evidence" value="ECO:0007669"/>
    <property type="project" value="UniProtKB-UniRule"/>
</dbReference>
<dbReference type="CDD" id="cd03284">
    <property type="entry name" value="ABC_MutS1"/>
    <property type="match status" value="1"/>
</dbReference>
<dbReference type="FunFam" id="1.10.1420.10:FF:000018">
    <property type="entry name" value="DNA mismatch repair protein MutS"/>
    <property type="match status" value="1"/>
</dbReference>
<dbReference type="FunFam" id="3.40.1170.10:FF:000001">
    <property type="entry name" value="DNA mismatch repair protein MutS"/>
    <property type="match status" value="1"/>
</dbReference>
<dbReference type="FunFam" id="3.40.50.300:FF:000283">
    <property type="entry name" value="DNA mismatch repair protein MutS"/>
    <property type="match status" value="1"/>
</dbReference>
<dbReference type="Gene3D" id="1.10.1420.10">
    <property type="match status" value="2"/>
</dbReference>
<dbReference type="Gene3D" id="6.10.140.430">
    <property type="match status" value="1"/>
</dbReference>
<dbReference type="Gene3D" id="3.40.1170.10">
    <property type="entry name" value="DNA repair protein MutS, domain I"/>
    <property type="match status" value="1"/>
</dbReference>
<dbReference type="Gene3D" id="3.30.420.110">
    <property type="entry name" value="MutS, connector domain"/>
    <property type="match status" value="1"/>
</dbReference>
<dbReference type="Gene3D" id="3.40.50.300">
    <property type="entry name" value="P-loop containing nucleotide triphosphate hydrolases"/>
    <property type="match status" value="1"/>
</dbReference>
<dbReference type="HAMAP" id="MF_00096">
    <property type="entry name" value="MutS"/>
    <property type="match status" value="1"/>
</dbReference>
<dbReference type="InterPro" id="IPR005748">
    <property type="entry name" value="DNA_mismatch_repair_MutS"/>
</dbReference>
<dbReference type="InterPro" id="IPR007695">
    <property type="entry name" value="DNA_mismatch_repair_MutS-lik_N"/>
</dbReference>
<dbReference type="InterPro" id="IPR017261">
    <property type="entry name" value="DNA_mismatch_repair_MutS/MSH"/>
</dbReference>
<dbReference type="InterPro" id="IPR000432">
    <property type="entry name" value="DNA_mismatch_repair_MutS_C"/>
</dbReference>
<dbReference type="InterPro" id="IPR007861">
    <property type="entry name" value="DNA_mismatch_repair_MutS_clamp"/>
</dbReference>
<dbReference type="InterPro" id="IPR007696">
    <property type="entry name" value="DNA_mismatch_repair_MutS_core"/>
</dbReference>
<dbReference type="InterPro" id="IPR016151">
    <property type="entry name" value="DNA_mismatch_repair_MutS_N"/>
</dbReference>
<dbReference type="InterPro" id="IPR036187">
    <property type="entry name" value="DNA_mismatch_repair_MutS_sf"/>
</dbReference>
<dbReference type="InterPro" id="IPR007860">
    <property type="entry name" value="DNA_mmatch_repair_MutS_con_dom"/>
</dbReference>
<dbReference type="InterPro" id="IPR045076">
    <property type="entry name" value="MutS"/>
</dbReference>
<dbReference type="InterPro" id="IPR036678">
    <property type="entry name" value="MutS_con_dom_sf"/>
</dbReference>
<dbReference type="InterPro" id="IPR027417">
    <property type="entry name" value="P-loop_NTPase"/>
</dbReference>
<dbReference type="NCBIfam" id="TIGR01070">
    <property type="entry name" value="mutS1"/>
    <property type="match status" value="1"/>
</dbReference>
<dbReference type="NCBIfam" id="NF003810">
    <property type="entry name" value="PRK05399.1"/>
    <property type="match status" value="1"/>
</dbReference>
<dbReference type="PANTHER" id="PTHR11361:SF34">
    <property type="entry name" value="DNA MISMATCH REPAIR PROTEIN MSH1, MITOCHONDRIAL"/>
    <property type="match status" value="1"/>
</dbReference>
<dbReference type="PANTHER" id="PTHR11361">
    <property type="entry name" value="DNA MISMATCH REPAIR PROTEIN MUTS FAMILY MEMBER"/>
    <property type="match status" value="1"/>
</dbReference>
<dbReference type="Pfam" id="PF01624">
    <property type="entry name" value="MutS_I"/>
    <property type="match status" value="1"/>
</dbReference>
<dbReference type="Pfam" id="PF05188">
    <property type="entry name" value="MutS_II"/>
    <property type="match status" value="1"/>
</dbReference>
<dbReference type="Pfam" id="PF05192">
    <property type="entry name" value="MutS_III"/>
    <property type="match status" value="1"/>
</dbReference>
<dbReference type="Pfam" id="PF05190">
    <property type="entry name" value="MutS_IV"/>
    <property type="match status" value="1"/>
</dbReference>
<dbReference type="Pfam" id="PF00488">
    <property type="entry name" value="MutS_V"/>
    <property type="match status" value="1"/>
</dbReference>
<dbReference type="PIRSF" id="PIRSF037677">
    <property type="entry name" value="DNA_mis_repair_Msh6"/>
    <property type="match status" value="1"/>
</dbReference>
<dbReference type="SMART" id="SM00534">
    <property type="entry name" value="MUTSac"/>
    <property type="match status" value="1"/>
</dbReference>
<dbReference type="SMART" id="SM00533">
    <property type="entry name" value="MUTSd"/>
    <property type="match status" value="1"/>
</dbReference>
<dbReference type="SUPFAM" id="SSF55271">
    <property type="entry name" value="DNA repair protein MutS, domain I"/>
    <property type="match status" value="1"/>
</dbReference>
<dbReference type="SUPFAM" id="SSF53150">
    <property type="entry name" value="DNA repair protein MutS, domain II"/>
    <property type="match status" value="1"/>
</dbReference>
<dbReference type="SUPFAM" id="SSF48334">
    <property type="entry name" value="DNA repair protein MutS, domain III"/>
    <property type="match status" value="1"/>
</dbReference>
<dbReference type="SUPFAM" id="SSF52540">
    <property type="entry name" value="P-loop containing nucleoside triphosphate hydrolases"/>
    <property type="match status" value="1"/>
</dbReference>
<dbReference type="PROSITE" id="PS00486">
    <property type="entry name" value="DNA_MISMATCH_REPAIR_2"/>
    <property type="match status" value="1"/>
</dbReference>
<name>MUTS_XANE5</name>
<organism>
    <name type="scientific">Xanthomonas euvesicatoria pv. vesicatoria (strain 85-10)</name>
    <name type="common">Xanthomonas campestris pv. vesicatoria</name>
    <dbReference type="NCBI Taxonomy" id="316273"/>
    <lineage>
        <taxon>Bacteria</taxon>
        <taxon>Pseudomonadati</taxon>
        <taxon>Pseudomonadota</taxon>
        <taxon>Gammaproteobacteria</taxon>
        <taxon>Lysobacterales</taxon>
        <taxon>Lysobacteraceae</taxon>
        <taxon>Xanthomonas</taxon>
    </lineage>
</organism>
<protein>
    <recommendedName>
        <fullName evidence="1">DNA mismatch repair protein MutS</fullName>
    </recommendedName>
</protein>
<feature type="chain" id="PRO_0000224418" description="DNA mismatch repair protein MutS">
    <location>
        <begin position="1"/>
        <end position="873"/>
    </location>
</feature>
<feature type="binding site" evidence="1">
    <location>
        <begin position="625"/>
        <end position="632"/>
    </location>
    <ligand>
        <name>ATP</name>
        <dbReference type="ChEBI" id="CHEBI:30616"/>
    </ligand>
</feature>
<reference key="1">
    <citation type="journal article" date="2005" name="J. Bacteriol.">
        <title>Insights into genome plasticity and pathogenicity of the plant pathogenic Bacterium Xanthomonas campestris pv. vesicatoria revealed by the complete genome sequence.</title>
        <authorList>
            <person name="Thieme F."/>
            <person name="Koebnik R."/>
            <person name="Bekel T."/>
            <person name="Berger C."/>
            <person name="Boch J."/>
            <person name="Buettner D."/>
            <person name="Caldana C."/>
            <person name="Gaigalat L."/>
            <person name="Goesmann A."/>
            <person name="Kay S."/>
            <person name="Kirchner O."/>
            <person name="Lanz C."/>
            <person name="Linke B."/>
            <person name="McHardy A.C."/>
            <person name="Meyer F."/>
            <person name="Mittenhuber G."/>
            <person name="Nies D.H."/>
            <person name="Niesbach-Kloesgen U."/>
            <person name="Patschkowski T."/>
            <person name="Rueckert C."/>
            <person name="Rupp O."/>
            <person name="Schneiker S."/>
            <person name="Schuster S.C."/>
            <person name="Vorhoelter F.J."/>
            <person name="Weber E."/>
            <person name="Puehler A."/>
            <person name="Bonas U."/>
            <person name="Bartels D."/>
            <person name="Kaiser O."/>
        </authorList>
    </citation>
    <scope>NUCLEOTIDE SEQUENCE [LARGE SCALE GENOMIC DNA]</scope>
    <source>
        <strain>85-10</strain>
    </source>
</reference>
<evidence type="ECO:0000255" key="1">
    <source>
        <dbReference type="HAMAP-Rule" id="MF_00096"/>
    </source>
</evidence>
<accession>Q3BVY0</accession>